<dbReference type="EMBL" id="D87864">
    <property type="protein sequence ID" value="BAA13481.1"/>
    <property type="molecule type" value="mRNA"/>
</dbReference>
<dbReference type="SMR" id="Q94676"/>
<dbReference type="EnsemblMetazoa" id="XM_043003069.1">
    <property type="protein sequence ID" value="XP_042859003.1"/>
    <property type="gene ID" value="LOC122245119"/>
</dbReference>
<dbReference type="OrthoDB" id="6365952at2759"/>
<dbReference type="GO" id="GO:0005576">
    <property type="term" value="C:extracellular region"/>
    <property type="evidence" value="ECO:0007669"/>
    <property type="project" value="UniProtKB-SubCell"/>
</dbReference>
<dbReference type="GO" id="GO:0005184">
    <property type="term" value="F:neuropeptide hormone activity"/>
    <property type="evidence" value="ECO:0007669"/>
    <property type="project" value="InterPro"/>
</dbReference>
<dbReference type="GO" id="GO:0007623">
    <property type="term" value="P:circadian rhythm"/>
    <property type="evidence" value="ECO:0007669"/>
    <property type="project" value="TreeGrafter"/>
</dbReference>
<dbReference type="GO" id="GO:0006006">
    <property type="term" value="P:glucose metabolic process"/>
    <property type="evidence" value="ECO:0007669"/>
    <property type="project" value="UniProtKB-KW"/>
</dbReference>
<dbReference type="GO" id="GO:0007218">
    <property type="term" value="P:neuropeptide signaling pathway"/>
    <property type="evidence" value="ECO:0007669"/>
    <property type="project" value="UniProtKB-KW"/>
</dbReference>
<dbReference type="Gene3D" id="1.10.2010.10">
    <property type="entry name" value="Crustacean CHH/MIH/GIH neurohormone"/>
    <property type="match status" value="1"/>
</dbReference>
<dbReference type="InterPro" id="IPR018251">
    <property type="entry name" value="Crust_neurhormone_CS"/>
</dbReference>
<dbReference type="InterPro" id="IPR031098">
    <property type="entry name" value="Crust_neurohorm"/>
</dbReference>
<dbReference type="InterPro" id="IPR035957">
    <property type="entry name" value="Crust_neurohorm_sf"/>
</dbReference>
<dbReference type="InterPro" id="IPR001166">
    <property type="entry name" value="Hyperglycemic"/>
</dbReference>
<dbReference type="InterPro" id="IPR000346">
    <property type="entry name" value="Hyperglycemic1"/>
</dbReference>
<dbReference type="PANTHER" id="PTHR35981">
    <property type="entry name" value="ION TRANSPORT PEPTIDE, ISOFORM C"/>
    <property type="match status" value="1"/>
</dbReference>
<dbReference type="PANTHER" id="PTHR35981:SF2">
    <property type="entry name" value="ION TRANSPORT PEPTIDE, ISOFORM C"/>
    <property type="match status" value="1"/>
</dbReference>
<dbReference type="Pfam" id="PF01147">
    <property type="entry name" value="Crust_neurohorm"/>
    <property type="match status" value="1"/>
</dbReference>
<dbReference type="PRINTS" id="PR00548">
    <property type="entry name" value="HYPRGLYCEMC1"/>
</dbReference>
<dbReference type="PRINTS" id="PR00550">
    <property type="entry name" value="HYPRGLYCEMIC"/>
</dbReference>
<dbReference type="SUPFAM" id="SSF81778">
    <property type="entry name" value="Crustacean CHH/MIH/GIH neurohormone"/>
    <property type="match status" value="1"/>
</dbReference>
<dbReference type="PROSITE" id="PS01250">
    <property type="entry name" value="CHH_MIH_GIH"/>
    <property type="match status" value="1"/>
</dbReference>
<protein>
    <recommendedName>
        <fullName>Crustacean hyperglycemic hormones 3</fullName>
    </recommendedName>
    <alternativeName>
        <fullName>Pej-SGP-III</fullName>
    </alternativeName>
    <component>
        <recommendedName>
            <fullName>CHH precursor-related peptide 3</fullName>
            <shortName>CPRP 3</shortName>
        </recommendedName>
    </component>
    <component>
        <recommendedName>
            <fullName>Crustacean hyperglycemic hormone 3</fullName>
            <shortName>CHH 3</shortName>
        </recommendedName>
    </component>
</protein>
<comment type="function">
    <text>Hormone found in the sinus gland of isopods and decapods which controls the blood sugar level. Has a secretagogue action over the amylase released from the midgut gland. May act as a stress hormone and may be involved in the control of molting and reproduction.</text>
</comment>
<comment type="subcellular location">
    <subcellularLocation>
        <location>Secreted</location>
    </subcellularLocation>
</comment>
<comment type="tissue specificity">
    <text>Produced by the medulla terminalis X-organ in the eyestalks and transported to the sinus gland where they are stored and released.</text>
</comment>
<comment type="similarity">
    <text evidence="3">Belongs to the arthropod CHH/MIH/GIH/VIH hormone family.</text>
</comment>
<proteinExistence type="evidence at transcript level"/>
<name>CHH3_PENJP</name>
<organism>
    <name type="scientific">Penaeus japonicus</name>
    <name type="common">Kuruma prawn</name>
    <name type="synonym">Marsupenaeus japonicus</name>
    <dbReference type="NCBI Taxonomy" id="27405"/>
    <lineage>
        <taxon>Eukaryota</taxon>
        <taxon>Metazoa</taxon>
        <taxon>Ecdysozoa</taxon>
        <taxon>Arthropoda</taxon>
        <taxon>Crustacea</taxon>
        <taxon>Multicrustacea</taxon>
        <taxon>Malacostraca</taxon>
        <taxon>Eumalacostraca</taxon>
        <taxon>Eucarida</taxon>
        <taxon>Decapoda</taxon>
        <taxon>Dendrobranchiata</taxon>
        <taxon>Penaeoidea</taxon>
        <taxon>Penaeidae</taxon>
        <taxon>Penaeus</taxon>
    </lineage>
</organism>
<evidence type="ECO:0000250" key="1"/>
<evidence type="ECO:0000255" key="2"/>
<evidence type="ECO:0000305" key="3"/>
<sequence length="117" mass="12954">MVTPRMLSALSAVLLLVLTASSSARSFDASPSATSGNHSLNKRSLFDPACTGIYDRQLLRKLGRLCDDCYNVFREPKVATGCRSNCYHNLIFLDCLEYLIPSHLQEEHMAAMQTVGK</sequence>
<keyword id="KW-0027">Amidation</keyword>
<keyword id="KW-0119">Carbohydrate metabolism</keyword>
<keyword id="KW-0165">Cleavage on pair of basic residues</keyword>
<keyword id="KW-1015">Disulfide bond</keyword>
<keyword id="KW-0313">Glucose metabolism</keyword>
<keyword id="KW-0372">Hormone</keyword>
<keyword id="KW-0527">Neuropeptide</keyword>
<keyword id="KW-0964">Secreted</keyword>
<keyword id="KW-0732">Signal</keyword>
<reference key="1">
    <citation type="journal article" date="1997" name="Mol. Mar. Biol. Biotechnol.">
        <title>Cloning and sequence analysis of a cDNA encoding a crustacean hyperglycemic hormone from the Kuruma prawn Penaeus japonicus.</title>
        <authorList>
            <person name="Ohira T."/>
            <person name="Watanabe T."/>
            <person name="Nagasawa H."/>
            <person name="Aida K."/>
        </authorList>
    </citation>
    <scope>NUCLEOTIDE SEQUENCE [MRNA]</scope>
    <source>
        <tissue>Eyestalk</tissue>
    </source>
</reference>
<feature type="signal peptide" evidence="2">
    <location>
        <begin position="1"/>
        <end position="24"/>
    </location>
</feature>
<feature type="peptide" id="PRO_0000019055" description="CHH precursor-related peptide 3">
    <location>
        <begin position="25"/>
        <end position="41"/>
    </location>
</feature>
<feature type="peptide" id="PRO_0000019056" description="Crustacean hyperglycemic hormone 3">
    <location>
        <begin position="44"/>
        <end position="115"/>
    </location>
</feature>
<feature type="modified residue" description="Valine amide" evidence="1">
    <location>
        <position position="115"/>
    </location>
</feature>
<feature type="disulfide bond" evidence="1">
    <location>
        <begin position="50"/>
        <end position="86"/>
    </location>
</feature>
<feature type="disulfide bond" evidence="1">
    <location>
        <begin position="66"/>
        <end position="82"/>
    </location>
</feature>
<feature type="disulfide bond" evidence="1">
    <location>
        <begin position="69"/>
        <end position="95"/>
    </location>
</feature>
<accession>Q94676</accession>